<feature type="chain" id="PRO_0000293356" description="Small ribosomal subunit protein uS4">
    <location>
        <begin position="1"/>
        <end position="206"/>
    </location>
</feature>
<feature type="domain" description="S4 RNA-binding" evidence="1">
    <location>
        <begin position="94"/>
        <end position="154"/>
    </location>
</feature>
<feature type="region of interest" description="Disordered" evidence="2">
    <location>
        <begin position="18"/>
        <end position="46"/>
    </location>
</feature>
<organism>
    <name type="scientific">Roseobacter denitrificans (strain ATCC 33942 / OCh 114)</name>
    <name type="common">Erythrobacter sp. (strain OCh 114)</name>
    <name type="synonym">Roseobacter denitrificans</name>
    <dbReference type="NCBI Taxonomy" id="375451"/>
    <lineage>
        <taxon>Bacteria</taxon>
        <taxon>Pseudomonadati</taxon>
        <taxon>Pseudomonadota</taxon>
        <taxon>Alphaproteobacteria</taxon>
        <taxon>Rhodobacterales</taxon>
        <taxon>Roseobacteraceae</taxon>
        <taxon>Roseobacter</taxon>
    </lineage>
</organism>
<accession>Q163G0</accession>
<proteinExistence type="inferred from homology"/>
<reference key="1">
    <citation type="journal article" date="2007" name="J. Bacteriol.">
        <title>The complete genome sequence of Roseobacter denitrificans reveals a mixotrophic rather than photosynthetic metabolism.</title>
        <authorList>
            <person name="Swingley W.D."/>
            <person name="Sadekar S."/>
            <person name="Mastrian S.D."/>
            <person name="Matthies H.J."/>
            <person name="Hao J."/>
            <person name="Ramos H."/>
            <person name="Acharya C.R."/>
            <person name="Conrad A.L."/>
            <person name="Taylor H.L."/>
            <person name="Dejesa L.C."/>
            <person name="Shah M.K."/>
            <person name="O'Huallachain M.E."/>
            <person name="Lince M.T."/>
            <person name="Blankenship R.E."/>
            <person name="Beatty J.T."/>
            <person name="Touchman J.W."/>
        </authorList>
    </citation>
    <scope>NUCLEOTIDE SEQUENCE [LARGE SCALE GENOMIC DNA]</scope>
    <source>
        <strain>ATCC 33942 / OCh 114</strain>
    </source>
</reference>
<sequence>MTKRTSAKHKIDRRMGENIWGRPKSPVNRREYGPGQHGQRRKGKISDFGIQLRAKQKLKGYYGDLTEKQFRRIYAEAERVKGDTGENLIGLLERRLDAVVYRAKFVATVFAARQFVNHKHVRVNGKIVNIPSYRVKEGDVIEVRDRSKQMVALIEATQLAERDVPDYIEADHSKMQATFVRTPALGDVPYPVMMEPNLVVEFYAKN</sequence>
<protein>
    <recommendedName>
        <fullName evidence="1">Small ribosomal subunit protein uS4</fullName>
    </recommendedName>
    <alternativeName>
        <fullName evidence="3">30S ribosomal protein S4</fullName>
    </alternativeName>
</protein>
<gene>
    <name evidence="1" type="primary">rpsD</name>
    <name type="ordered locus">RD1_3391</name>
</gene>
<comment type="function">
    <text evidence="1">One of the primary rRNA binding proteins, it binds directly to 16S rRNA where it nucleates assembly of the body of the 30S subunit.</text>
</comment>
<comment type="function">
    <text evidence="1">With S5 and S12 plays an important role in translational accuracy.</text>
</comment>
<comment type="subunit">
    <text evidence="1">Part of the 30S ribosomal subunit. Contacts protein S5. The interaction surface between S4 and S5 is involved in control of translational fidelity.</text>
</comment>
<comment type="similarity">
    <text evidence="1">Belongs to the universal ribosomal protein uS4 family.</text>
</comment>
<evidence type="ECO:0000255" key="1">
    <source>
        <dbReference type="HAMAP-Rule" id="MF_01306"/>
    </source>
</evidence>
<evidence type="ECO:0000256" key="2">
    <source>
        <dbReference type="SAM" id="MobiDB-lite"/>
    </source>
</evidence>
<evidence type="ECO:0000305" key="3"/>
<dbReference type="EMBL" id="CP000362">
    <property type="protein sequence ID" value="ABG32883.1"/>
    <property type="molecule type" value="Genomic_DNA"/>
</dbReference>
<dbReference type="RefSeq" id="WP_011569498.1">
    <property type="nucleotide sequence ID" value="NC_008209.1"/>
</dbReference>
<dbReference type="SMR" id="Q163G0"/>
<dbReference type="STRING" id="375451.RD1_3391"/>
<dbReference type="KEGG" id="rde:RD1_3391"/>
<dbReference type="eggNOG" id="COG0522">
    <property type="taxonomic scope" value="Bacteria"/>
</dbReference>
<dbReference type="HOGENOM" id="CLU_092403_0_0_5"/>
<dbReference type="OrthoDB" id="9803672at2"/>
<dbReference type="Proteomes" id="UP000007029">
    <property type="component" value="Chromosome"/>
</dbReference>
<dbReference type="GO" id="GO:0015935">
    <property type="term" value="C:small ribosomal subunit"/>
    <property type="evidence" value="ECO:0007669"/>
    <property type="project" value="InterPro"/>
</dbReference>
<dbReference type="GO" id="GO:0019843">
    <property type="term" value="F:rRNA binding"/>
    <property type="evidence" value="ECO:0007669"/>
    <property type="project" value="UniProtKB-UniRule"/>
</dbReference>
<dbReference type="GO" id="GO:0003735">
    <property type="term" value="F:structural constituent of ribosome"/>
    <property type="evidence" value="ECO:0007669"/>
    <property type="project" value="InterPro"/>
</dbReference>
<dbReference type="GO" id="GO:0042274">
    <property type="term" value="P:ribosomal small subunit biogenesis"/>
    <property type="evidence" value="ECO:0007669"/>
    <property type="project" value="TreeGrafter"/>
</dbReference>
<dbReference type="GO" id="GO:0006412">
    <property type="term" value="P:translation"/>
    <property type="evidence" value="ECO:0007669"/>
    <property type="project" value="UniProtKB-UniRule"/>
</dbReference>
<dbReference type="CDD" id="cd00165">
    <property type="entry name" value="S4"/>
    <property type="match status" value="1"/>
</dbReference>
<dbReference type="FunFam" id="3.10.290.10:FF:000001">
    <property type="entry name" value="30S ribosomal protein S4"/>
    <property type="match status" value="1"/>
</dbReference>
<dbReference type="Gene3D" id="1.10.1050.10">
    <property type="entry name" value="Ribosomal Protein S4 Delta 41, Chain A, domain 1"/>
    <property type="match status" value="1"/>
</dbReference>
<dbReference type="Gene3D" id="3.10.290.10">
    <property type="entry name" value="RNA-binding S4 domain"/>
    <property type="match status" value="1"/>
</dbReference>
<dbReference type="HAMAP" id="MF_01306_B">
    <property type="entry name" value="Ribosomal_uS4_B"/>
    <property type="match status" value="1"/>
</dbReference>
<dbReference type="InterPro" id="IPR022801">
    <property type="entry name" value="Ribosomal_uS4"/>
</dbReference>
<dbReference type="InterPro" id="IPR005709">
    <property type="entry name" value="Ribosomal_uS4_bac-type"/>
</dbReference>
<dbReference type="InterPro" id="IPR018079">
    <property type="entry name" value="Ribosomal_uS4_CS"/>
</dbReference>
<dbReference type="InterPro" id="IPR001912">
    <property type="entry name" value="Ribosomal_uS4_N"/>
</dbReference>
<dbReference type="InterPro" id="IPR002942">
    <property type="entry name" value="S4_RNA-bd"/>
</dbReference>
<dbReference type="InterPro" id="IPR036986">
    <property type="entry name" value="S4_RNA-bd_sf"/>
</dbReference>
<dbReference type="NCBIfam" id="NF003717">
    <property type="entry name" value="PRK05327.1"/>
    <property type="match status" value="1"/>
</dbReference>
<dbReference type="NCBIfam" id="TIGR01017">
    <property type="entry name" value="rpsD_bact"/>
    <property type="match status" value="1"/>
</dbReference>
<dbReference type="PANTHER" id="PTHR11831">
    <property type="entry name" value="30S 40S RIBOSOMAL PROTEIN"/>
    <property type="match status" value="1"/>
</dbReference>
<dbReference type="PANTHER" id="PTHR11831:SF4">
    <property type="entry name" value="SMALL RIBOSOMAL SUBUNIT PROTEIN US4M"/>
    <property type="match status" value="1"/>
</dbReference>
<dbReference type="Pfam" id="PF00163">
    <property type="entry name" value="Ribosomal_S4"/>
    <property type="match status" value="1"/>
</dbReference>
<dbReference type="Pfam" id="PF01479">
    <property type="entry name" value="S4"/>
    <property type="match status" value="1"/>
</dbReference>
<dbReference type="SMART" id="SM01390">
    <property type="entry name" value="Ribosomal_S4"/>
    <property type="match status" value="1"/>
</dbReference>
<dbReference type="SMART" id="SM00363">
    <property type="entry name" value="S4"/>
    <property type="match status" value="1"/>
</dbReference>
<dbReference type="SUPFAM" id="SSF55174">
    <property type="entry name" value="Alpha-L RNA-binding motif"/>
    <property type="match status" value="1"/>
</dbReference>
<dbReference type="PROSITE" id="PS00632">
    <property type="entry name" value="RIBOSOMAL_S4"/>
    <property type="match status" value="1"/>
</dbReference>
<dbReference type="PROSITE" id="PS50889">
    <property type="entry name" value="S4"/>
    <property type="match status" value="1"/>
</dbReference>
<keyword id="KW-1185">Reference proteome</keyword>
<keyword id="KW-0687">Ribonucleoprotein</keyword>
<keyword id="KW-0689">Ribosomal protein</keyword>
<keyword id="KW-0694">RNA-binding</keyword>
<keyword id="KW-0699">rRNA-binding</keyword>
<name>RS4_ROSDO</name>